<organism>
    <name type="scientific">Thermotoga maritima (strain ATCC 43589 / DSM 3109 / JCM 10099 / NBRC 100826 / MSB8)</name>
    <dbReference type="NCBI Taxonomy" id="243274"/>
    <lineage>
        <taxon>Bacteria</taxon>
        <taxon>Thermotogati</taxon>
        <taxon>Thermotogota</taxon>
        <taxon>Thermotogae</taxon>
        <taxon>Thermotogales</taxon>
        <taxon>Thermotogaceae</taxon>
        <taxon>Thermotoga</taxon>
    </lineage>
</organism>
<accession>Q9WZX6</accession>
<comment type="function">
    <text evidence="1">Specifically methylates the N4 position of cytidine in position 1402 (C1402) of 16S rRNA.</text>
</comment>
<comment type="catalytic activity">
    <reaction evidence="1">
        <text>cytidine(1402) in 16S rRNA + S-adenosyl-L-methionine = N(4)-methylcytidine(1402) in 16S rRNA + S-adenosyl-L-homocysteine + H(+)</text>
        <dbReference type="Rhea" id="RHEA:42928"/>
        <dbReference type="Rhea" id="RHEA-COMP:10286"/>
        <dbReference type="Rhea" id="RHEA-COMP:10287"/>
        <dbReference type="ChEBI" id="CHEBI:15378"/>
        <dbReference type="ChEBI" id="CHEBI:57856"/>
        <dbReference type="ChEBI" id="CHEBI:59789"/>
        <dbReference type="ChEBI" id="CHEBI:74506"/>
        <dbReference type="ChEBI" id="CHEBI:82748"/>
        <dbReference type="EC" id="2.1.1.199"/>
    </reaction>
</comment>
<comment type="subcellular location">
    <subcellularLocation>
        <location evidence="1">Cytoplasm</location>
    </subcellularLocation>
</comment>
<comment type="similarity">
    <text evidence="1">Belongs to the methyltransferase superfamily. RsmH family.</text>
</comment>
<name>RSMH_THEMA</name>
<feature type="chain" id="PRO_0000108732" description="Ribosomal RNA small subunit methyltransferase H">
    <location>
        <begin position="1"/>
        <end position="299"/>
    </location>
</feature>
<feature type="region of interest" description="Disordered" evidence="2">
    <location>
        <begin position="269"/>
        <end position="299"/>
    </location>
</feature>
<feature type="compositionally biased region" description="Basic and acidic residues" evidence="2">
    <location>
        <begin position="269"/>
        <end position="282"/>
    </location>
</feature>
<feature type="compositionally biased region" description="Basic and acidic residues" evidence="2">
    <location>
        <begin position="289"/>
        <end position="299"/>
    </location>
</feature>
<feature type="binding site" evidence="3">
    <location>
        <begin position="36"/>
        <end position="38"/>
    </location>
    <ligand>
        <name>S-adenosyl-L-methionine</name>
        <dbReference type="ChEBI" id="CHEBI:59789"/>
    </ligand>
</feature>
<feature type="binding site" evidence="3">
    <location>
        <position position="55"/>
    </location>
    <ligand>
        <name>S-adenosyl-L-methionine</name>
        <dbReference type="ChEBI" id="CHEBI:59789"/>
    </ligand>
</feature>
<feature type="binding site" evidence="3">
    <location>
        <position position="82"/>
    </location>
    <ligand>
        <name>S-adenosyl-L-methionine</name>
        <dbReference type="ChEBI" id="CHEBI:59789"/>
    </ligand>
</feature>
<feature type="binding site" evidence="3">
    <location>
        <position position="103"/>
    </location>
    <ligand>
        <name>S-adenosyl-L-methionine</name>
        <dbReference type="ChEBI" id="CHEBI:59789"/>
    </ligand>
</feature>
<feature type="binding site" evidence="3">
    <location>
        <position position="110"/>
    </location>
    <ligand>
        <name>S-adenosyl-L-methionine</name>
        <dbReference type="ChEBI" id="CHEBI:59789"/>
    </ligand>
</feature>
<feature type="helix" evidence="4">
    <location>
        <begin position="13"/>
        <end position="20"/>
    </location>
</feature>
<feature type="strand" evidence="4">
    <location>
        <begin position="27"/>
        <end position="30"/>
    </location>
</feature>
<feature type="helix" evidence="4">
    <location>
        <begin position="37"/>
        <end position="45"/>
    </location>
</feature>
<feature type="strand" evidence="4">
    <location>
        <begin position="50"/>
        <end position="56"/>
    </location>
</feature>
<feature type="helix" evidence="4">
    <location>
        <begin position="58"/>
        <end position="67"/>
    </location>
</feature>
<feature type="helix" evidence="4">
    <location>
        <begin position="69"/>
        <end position="71"/>
    </location>
</feature>
<feature type="turn" evidence="4">
    <location>
        <begin position="72"/>
        <end position="74"/>
    </location>
</feature>
<feature type="strand" evidence="4">
    <location>
        <begin position="75"/>
        <end position="79"/>
    </location>
</feature>
<feature type="helix" evidence="4">
    <location>
        <begin position="82"/>
        <end position="84"/>
    </location>
</feature>
<feature type="helix" evidence="4">
    <location>
        <begin position="85"/>
        <end position="91"/>
    </location>
</feature>
<feature type="strand" evidence="4">
    <location>
        <begin position="97"/>
        <end position="103"/>
    </location>
</feature>
<feature type="helix" evidence="4">
    <location>
        <begin position="108"/>
        <end position="112"/>
    </location>
</feature>
<feature type="strand" evidence="4">
    <location>
        <begin position="118"/>
        <end position="122"/>
    </location>
</feature>
<feature type="helix" evidence="4">
    <location>
        <begin position="138"/>
        <end position="144"/>
    </location>
</feature>
<feature type="helix" evidence="4">
    <location>
        <begin position="147"/>
        <end position="156"/>
    </location>
</feature>
<feature type="turn" evidence="4">
    <location>
        <begin position="161"/>
        <end position="163"/>
    </location>
</feature>
<feature type="helix" evidence="4">
    <location>
        <begin position="164"/>
        <end position="173"/>
    </location>
</feature>
<feature type="helix" evidence="4">
    <location>
        <begin position="180"/>
        <end position="190"/>
    </location>
</feature>
<feature type="helix" evidence="4">
    <location>
        <begin position="193"/>
        <end position="198"/>
    </location>
</feature>
<feature type="helix" evidence="4">
    <location>
        <begin position="205"/>
        <end position="216"/>
    </location>
</feature>
<feature type="helix" evidence="4">
    <location>
        <begin position="218"/>
        <end position="228"/>
    </location>
</feature>
<feature type="helix" evidence="4">
    <location>
        <begin position="229"/>
        <end position="232"/>
    </location>
</feature>
<feature type="strand" evidence="4">
    <location>
        <begin position="233"/>
        <end position="245"/>
    </location>
</feature>
<feature type="helix" evidence="4">
    <location>
        <begin position="246"/>
        <end position="258"/>
    </location>
</feature>
<feature type="strand" evidence="4">
    <location>
        <begin position="260"/>
        <end position="265"/>
    </location>
</feature>
<feature type="helix" evidence="4">
    <location>
        <begin position="274"/>
        <end position="279"/>
    </location>
</feature>
<feature type="helix" evidence="4">
    <location>
        <begin position="281"/>
        <end position="283"/>
    </location>
</feature>
<feature type="strand" evidence="4">
    <location>
        <begin position="287"/>
        <end position="293"/>
    </location>
</feature>
<evidence type="ECO:0000255" key="1">
    <source>
        <dbReference type="HAMAP-Rule" id="MF_01007"/>
    </source>
</evidence>
<evidence type="ECO:0000256" key="2">
    <source>
        <dbReference type="SAM" id="MobiDB-lite"/>
    </source>
</evidence>
<evidence type="ECO:0000269" key="3">
    <source>
    </source>
</evidence>
<evidence type="ECO:0007829" key="4">
    <source>
        <dbReference type="PDB" id="1M6Y"/>
    </source>
</evidence>
<keyword id="KW-0002">3D-structure</keyword>
<keyword id="KW-0963">Cytoplasm</keyword>
<keyword id="KW-0489">Methyltransferase</keyword>
<keyword id="KW-1185">Reference proteome</keyword>
<keyword id="KW-0698">rRNA processing</keyword>
<keyword id="KW-0949">S-adenosyl-L-methionine</keyword>
<keyword id="KW-0808">Transferase</keyword>
<dbReference type="EC" id="2.1.1.199" evidence="1"/>
<dbReference type="EMBL" id="AE000512">
    <property type="protein sequence ID" value="AAD35954.1"/>
    <property type="molecule type" value="Genomic_DNA"/>
</dbReference>
<dbReference type="PIR" id="C72323">
    <property type="entry name" value="C72323"/>
</dbReference>
<dbReference type="RefSeq" id="NP_228681.1">
    <property type="nucleotide sequence ID" value="NC_000853.1"/>
</dbReference>
<dbReference type="RefSeq" id="WP_004080729.1">
    <property type="nucleotide sequence ID" value="NZ_CP011107.1"/>
</dbReference>
<dbReference type="PDB" id="1M6Y">
    <property type="method" value="X-ray"/>
    <property type="resolution" value="1.90 A"/>
    <property type="chains" value="A/B=1-299"/>
</dbReference>
<dbReference type="PDB" id="1N2X">
    <property type="method" value="X-ray"/>
    <property type="resolution" value="1.90 A"/>
    <property type="chains" value="A/B=1-299"/>
</dbReference>
<dbReference type="PDBsum" id="1M6Y"/>
<dbReference type="PDBsum" id="1N2X"/>
<dbReference type="SMR" id="Q9WZX6"/>
<dbReference type="FunCoup" id="Q9WZX6">
    <property type="interactions" value="339"/>
</dbReference>
<dbReference type="STRING" id="243274.TM_0872"/>
<dbReference type="DrugBank" id="DB01752">
    <property type="generic name" value="S-adenosyl-L-homocysteine"/>
</dbReference>
<dbReference type="PaxDb" id="243274-THEMA_00275"/>
<dbReference type="EnsemblBacteria" id="AAD35954">
    <property type="protein sequence ID" value="AAD35954"/>
    <property type="gene ID" value="TM_0872"/>
</dbReference>
<dbReference type="KEGG" id="tma:TM0872"/>
<dbReference type="KEGG" id="tmi:THEMA_00275"/>
<dbReference type="KEGG" id="tmm:Tmari_0874"/>
<dbReference type="KEGG" id="tmw:THMA_0894"/>
<dbReference type="eggNOG" id="COG0275">
    <property type="taxonomic scope" value="Bacteria"/>
</dbReference>
<dbReference type="InParanoid" id="Q9WZX6"/>
<dbReference type="OrthoDB" id="9806637at2"/>
<dbReference type="EvolutionaryTrace" id="Q9WZX6"/>
<dbReference type="Proteomes" id="UP000008183">
    <property type="component" value="Chromosome"/>
</dbReference>
<dbReference type="GO" id="GO:0005737">
    <property type="term" value="C:cytoplasm"/>
    <property type="evidence" value="ECO:0000318"/>
    <property type="project" value="GO_Central"/>
</dbReference>
<dbReference type="GO" id="GO:0071424">
    <property type="term" value="F:rRNA (cytosine-N4-)-methyltransferase activity"/>
    <property type="evidence" value="ECO:0000318"/>
    <property type="project" value="GO_Central"/>
</dbReference>
<dbReference type="GO" id="GO:0070475">
    <property type="term" value="P:rRNA base methylation"/>
    <property type="evidence" value="ECO:0000318"/>
    <property type="project" value="GO_Central"/>
</dbReference>
<dbReference type="CDD" id="cd02440">
    <property type="entry name" value="AdoMet_MTases"/>
    <property type="match status" value="1"/>
</dbReference>
<dbReference type="Gene3D" id="1.10.150.170">
    <property type="entry name" value="Putative methyltransferase TM0872, insert domain"/>
    <property type="match status" value="1"/>
</dbReference>
<dbReference type="Gene3D" id="3.40.50.150">
    <property type="entry name" value="Vaccinia Virus protein VP39"/>
    <property type="match status" value="1"/>
</dbReference>
<dbReference type="HAMAP" id="MF_01007">
    <property type="entry name" value="16SrRNA_methyltr_H"/>
    <property type="match status" value="1"/>
</dbReference>
<dbReference type="InterPro" id="IPR002903">
    <property type="entry name" value="RsmH"/>
</dbReference>
<dbReference type="InterPro" id="IPR023397">
    <property type="entry name" value="SAM-dep_MeTrfase_MraW_recog"/>
</dbReference>
<dbReference type="InterPro" id="IPR029063">
    <property type="entry name" value="SAM-dependent_MTases_sf"/>
</dbReference>
<dbReference type="NCBIfam" id="TIGR00006">
    <property type="entry name" value="16S rRNA (cytosine(1402)-N(4))-methyltransferase RsmH"/>
    <property type="match status" value="1"/>
</dbReference>
<dbReference type="PANTHER" id="PTHR11265:SF0">
    <property type="entry name" value="12S RRNA N4-METHYLCYTIDINE METHYLTRANSFERASE"/>
    <property type="match status" value="1"/>
</dbReference>
<dbReference type="PANTHER" id="PTHR11265">
    <property type="entry name" value="S-ADENOSYL-METHYLTRANSFERASE MRAW"/>
    <property type="match status" value="1"/>
</dbReference>
<dbReference type="Pfam" id="PF01795">
    <property type="entry name" value="Methyltransf_5"/>
    <property type="match status" value="1"/>
</dbReference>
<dbReference type="PIRSF" id="PIRSF004486">
    <property type="entry name" value="MraW"/>
    <property type="match status" value="1"/>
</dbReference>
<dbReference type="SUPFAM" id="SSF81799">
    <property type="entry name" value="Putative methyltransferase TM0872, insert domain"/>
    <property type="match status" value="1"/>
</dbReference>
<dbReference type="SUPFAM" id="SSF53335">
    <property type="entry name" value="S-adenosyl-L-methionine-dependent methyltransferases"/>
    <property type="match status" value="1"/>
</dbReference>
<protein>
    <recommendedName>
        <fullName evidence="1">Ribosomal RNA small subunit methyltransferase H</fullName>
        <ecNumber evidence="1">2.1.1.199</ecNumber>
    </recommendedName>
    <alternativeName>
        <fullName evidence="1">16S rRNA m(4)C1402 methyltransferase</fullName>
    </alternativeName>
    <alternativeName>
        <fullName evidence="1">rRNA (cytosine-N(4)-)-methyltransferase RsmH</fullName>
    </alternativeName>
</protein>
<sequence>MRKYSQRHIPVMVREVIEFLKPEDEKIILDCTVGEGGHSRAILEHCPGCRIIGIDVDSEVLRIAEEKLKEFSDRVSLFKVSYREADFLLKTLGIEKVDGILMDLGVSTYQLKGENRGFTFEREEPLDMRMDLESEVTAQKVLNELPEEELARIIFEYGEEKRFARRIARKIVENRPLNTTLDLVKAVREALPSYEIRRRKRHFATKTFQAIRIYVNRELENLKEFLKKAEDLLNPGGRIVVISFHSLEDRIVKETFRNSKKLRILTEKPVRPSEEEIRENPRARSGRLRAAERIEEGGD</sequence>
<reference key="1">
    <citation type="journal article" date="1999" name="Nature">
        <title>Evidence for lateral gene transfer between Archaea and Bacteria from genome sequence of Thermotoga maritima.</title>
        <authorList>
            <person name="Nelson K.E."/>
            <person name="Clayton R.A."/>
            <person name="Gill S.R."/>
            <person name="Gwinn M.L."/>
            <person name="Dodson R.J."/>
            <person name="Haft D.H."/>
            <person name="Hickey E.K."/>
            <person name="Peterson J.D."/>
            <person name="Nelson W.C."/>
            <person name="Ketchum K.A."/>
            <person name="McDonald L.A."/>
            <person name="Utterback T.R."/>
            <person name="Malek J.A."/>
            <person name="Linher K.D."/>
            <person name="Garrett M.M."/>
            <person name="Stewart A.M."/>
            <person name="Cotton M.D."/>
            <person name="Pratt M.S."/>
            <person name="Phillips C.A."/>
            <person name="Richardson D.L."/>
            <person name="Heidelberg J.F."/>
            <person name="Sutton G.G."/>
            <person name="Fleischmann R.D."/>
            <person name="Eisen J.A."/>
            <person name="White O."/>
            <person name="Salzberg S.L."/>
            <person name="Smith H.O."/>
            <person name="Venter J.C."/>
            <person name="Fraser C.M."/>
        </authorList>
    </citation>
    <scope>NUCLEOTIDE SEQUENCE [LARGE SCALE GENOMIC DNA]</scope>
    <source>
        <strain>ATCC 43589 / DSM 3109 / JCM 10099 / NBRC 100826 / MSB8</strain>
    </source>
</reference>
<reference key="2">
    <citation type="journal article" date="2003" name="Protein Sci.">
        <title>Crystal complexes of a predicted S-adenosylmethionine-dependent methyltransferase reveal a typical AdoMet binding domain and a substrate recognition domain.</title>
        <authorList>
            <person name="Miller D.J."/>
            <person name="Ouellette N."/>
            <person name="Evdokimova E."/>
            <person name="Savchenko A."/>
            <person name="Edwards A."/>
            <person name="Anderson W.F."/>
        </authorList>
    </citation>
    <scope>X-RAY CRYSTALLOGRAPHY (1.9 ANGSTROMS) IN COMPLEXES WITH S-ADENOSYL-L-METHIONINE AND S-ADENOSYL-L-HOMOCYSTEINE</scope>
</reference>
<gene>
    <name evidence="1" type="primary">rsmH</name>
    <name type="synonym">mraW</name>
    <name type="ordered locus">TM_0872</name>
</gene>
<proteinExistence type="evidence at protein level"/>